<name>YORF3_TTVVG</name>
<organismHost>
    <name type="scientific">Homo sapiens</name>
    <name type="common">Human</name>
    <dbReference type="NCBI Taxonomy" id="9606"/>
</organismHost>
<gene>
    <name type="ORF">ORF3</name>
</gene>
<keyword id="KW-1185">Reference proteome</keyword>
<reference key="1">
    <citation type="journal article" date="1999" name="Proc. Natl. Acad. Sci. U.S.A.">
        <title>Molecular and biophysical characterization of TT virus: evidence for a new virus family infecting humans.</title>
        <authorList>
            <person name="Mushahwar I.K."/>
            <person name="Erker J.C."/>
            <person name="Muerhoff A.S."/>
            <person name="Leary T.P."/>
            <person name="Simons J.N."/>
            <person name="Birkenmeyer L.G."/>
            <person name="Chalmers M.L."/>
            <person name="Pilot-Matias T.J."/>
            <person name="Dexai S.M."/>
        </authorList>
    </citation>
    <scope>NUCLEOTIDE SEQUENCE [GENOMIC DNA]</scope>
</reference>
<reference key="2">
    <citation type="journal article" date="2007" name="Rev. Med. Virol.">
        <title>Torque teno virus (TTV): current status.</title>
        <authorList>
            <person name="Hino S."/>
            <person name="Miyata H."/>
        </authorList>
    </citation>
    <scope>REVIEW</scope>
</reference>
<protein>
    <recommendedName>
        <fullName>Uncharacterized ORF3 protein</fullName>
    </recommendedName>
</protein>
<organism>
    <name type="scientific">Torque teno virus (isolate Human/Ghana/GH1/1996)</name>
    <name type="common">TTV</name>
    <dbReference type="NCBI Taxonomy" id="487067"/>
    <lineage>
        <taxon>Viruses</taxon>
        <taxon>Viruses incertae sedis</taxon>
        <taxon>Anelloviridae</taxon>
        <taxon>Torque teno virus</taxon>
    </lineage>
</organism>
<proteinExistence type="predicted"/>
<accession>Q9WGZ1</accession>
<dbReference type="EMBL" id="AF122913">
    <property type="protein sequence ID" value="AAD24200.1"/>
    <property type="molecule type" value="Genomic_DNA"/>
</dbReference>
<dbReference type="SMR" id="Q9WGZ1"/>
<dbReference type="Proteomes" id="UP000007550">
    <property type="component" value="Genome"/>
</dbReference>
<sequence>MFGDPKPYNPSSNDWKEEYEACKYWDRPPRGNLRDTPYYPWAPKENQYRVNFKLGFQ</sequence>
<feature type="chain" id="PRO_0000317473" description="Uncharacterized ORF3 protein">
    <location>
        <begin position="1"/>
        <end position="57"/>
    </location>
</feature>